<reference key="1">
    <citation type="submission" date="2005-09" db="EMBL/GenBank/DDBJ databases">
        <title>Complete genome sequence of Clostridium kluyveri and comparative genomics of Clostridia species.</title>
        <authorList>
            <person name="Inui M."/>
            <person name="Nonaka H."/>
            <person name="Shinoda Y."/>
            <person name="Ikenaga Y."/>
            <person name="Abe M."/>
            <person name="Naito K."/>
            <person name="Vertes A.A."/>
            <person name="Yukawa H."/>
        </authorList>
    </citation>
    <scope>NUCLEOTIDE SEQUENCE [LARGE SCALE GENOMIC DNA]</scope>
    <source>
        <strain>NBRC 12016</strain>
    </source>
</reference>
<organism>
    <name type="scientific">Clostridium kluyveri (strain NBRC 12016)</name>
    <dbReference type="NCBI Taxonomy" id="583346"/>
    <lineage>
        <taxon>Bacteria</taxon>
        <taxon>Bacillati</taxon>
        <taxon>Bacillota</taxon>
        <taxon>Clostridia</taxon>
        <taxon>Eubacteriales</taxon>
        <taxon>Clostridiaceae</taxon>
        <taxon>Clostridium</taxon>
    </lineage>
</organism>
<sequence>MSEIKVGENETIESALRRFKRKCARAGVLSEVRKREHYEKPSVKRKKKSEAARKRKFK</sequence>
<name>RS21_CLOK1</name>
<dbReference type="EMBL" id="AP009049">
    <property type="protein sequence ID" value="BAH05872.1"/>
    <property type="molecule type" value="Genomic_DNA"/>
</dbReference>
<dbReference type="RefSeq" id="WP_007061146.1">
    <property type="nucleotide sequence ID" value="NC_011837.1"/>
</dbReference>
<dbReference type="SMR" id="B9E047"/>
<dbReference type="GeneID" id="29418189"/>
<dbReference type="KEGG" id="ckr:CKR_0821"/>
<dbReference type="HOGENOM" id="CLU_159258_1_2_9"/>
<dbReference type="Proteomes" id="UP000007969">
    <property type="component" value="Chromosome"/>
</dbReference>
<dbReference type="GO" id="GO:1990904">
    <property type="term" value="C:ribonucleoprotein complex"/>
    <property type="evidence" value="ECO:0007669"/>
    <property type="project" value="UniProtKB-KW"/>
</dbReference>
<dbReference type="GO" id="GO:0005840">
    <property type="term" value="C:ribosome"/>
    <property type="evidence" value="ECO:0007669"/>
    <property type="project" value="UniProtKB-KW"/>
</dbReference>
<dbReference type="GO" id="GO:0003735">
    <property type="term" value="F:structural constituent of ribosome"/>
    <property type="evidence" value="ECO:0007669"/>
    <property type="project" value="InterPro"/>
</dbReference>
<dbReference type="GO" id="GO:0006412">
    <property type="term" value="P:translation"/>
    <property type="evidence" value="ECO:0007669"/>
    <property type="project" value="UniProtKB-UniRule"/>
</dbReference>
<dbReference type="Gene3D" id="1.20.5.1150">
    <property type="entry name" value="Ribosomal protein S8"/>
    <property type="match status" value="1"/>
</dbReference>
<dbReference type="HAMAP" id="MF_00358">
    <property type="entry name" value="Ribosomal_bS21"/>
    <property type="match status" value="1"/>
</dbReference>
<dbReference type="InterPro" id="IPR001911">
    <property type="entry name" value="Ribosomal_bS21"/>
</dbReference>
<dbReference type="InterPro" id="IPR018278">
    <property type="entry name" value="Ribosomal_bS21_CS"/>
</dbReference>
<dbReference type="InterPro" id="IPR038380">
    <property type="entry name" value="Ribosomal_bS21_sf"/>
</dbReference>
<dbReference type="NCBIfam" id="TIGR00030">
    <property type="entry name" value="S21p"/>
    <property type="match status" value="1"/>
</dbReference>
<dbReference type="PANTHER" id="PTHR21109">
    <property type="entry name" value="MITOCHONDRIAL 28S RIBOSOMAL PROTEIN S21"/>
    <property type="match status" value="1"/>
</dbReference>
<dbReference type="PANTHER" id="PTHR21109:SF22">
    <property type="entry name" value="SMALL RIBOSOMAL SUBUNIT PROTEIN BS21"/>
    <property type="match status" value="1"/>
</dbReference>
<dbReference type="Pfam" id="PF01165">
    <property type="entry name" value="Ribosomal_S21"/>
    <property type="match status" value="1"/>
</dbReference>
<dbReference type="PRINTS" id="PR00976">
    <property type="entry name" value="RIBOSOMALS21"/>
</dbReference>
<dbReference type="PROSITE" id="PS01181">
    <property type="entry name" value="RIBOSOMAL_S21"/>
    <property type="match status" value="1"/>
</dbReference>
<accession>B9E047</accession>
<proteinExistence type="inferred from homology"/>
<evidence type="ECO:0000255" key="1">
    <source>
        <dbReference type="HAMAP-Rule" id="MF_00358"/>
    </source>
</evidence>
<evidence type="ECO:0000256" key="2">
    <source>
        <dbReference type="SAM" id="MobiDB-lite"/>
    </source>
</evidence>
<evidence type="ECO:0000305" key="3"/>
<comment type="similarity">
    <text evidence="1">Belongs to the bacterial ribosomal protein bS21 family.</text>
</comment>
<protein>
    <recommendedName>
        <fullName evidence="1">Small ribosomal subunit protein bS21</fullName>
    </recommendedName>
    <alternativeName>
        <fullName evidence="3">30S ribosomal protein S21</fullName>
    </alternativeName>
</protein>
<feature type="chain" id="PRO_1000194287" description="Small ribosomal subunit protein bS21">
    <location>
        <begin position="1"/>
        <end position="58"/>
    </location>
</feature>
<feature type="region of interest" description="Disordered" evidence="2">
    <location>
        <begin position="36"/>
        <end position="58"/>
    </location>
</feature>
<feature type="compositionally biased region" description="Basic residues" evidence="2">
    <location>
        <begin position="43"/>
        <end position="58"/>
    </location>
</feature>
<gene>
    <name evidence="1" type="primary">rpsU</name>
    <name type="ordered locus">CKR_0821</name>
</gene>
<keyword id="KW-0687">Ribonucleoprotein</keyword>
<keyword id="KW-0689">Ribosomal protein</keyword>